<feature type="chain" id="PRO_0000366582" description="Ribosomal RNA large subunit methyltransferase H">
    <location>
        <begin position="1"/>
        <end position="159"/>
    </location>
</feature>
<feature type="binding site" evidence="1">
    <location>
        <position position="76"/>
    </location>
    <ligand>
        <name>S-adenosyl-L-methionine</name>
        <dbReference type="ChEBI" id="CHEBI:59789"/>
    </ligand>
</feature>
<feature type="binding site" evidence="1">
    <location>
        <position position="108"/>
    </location>
    <ligand>
        <name>S-adenosyl-L-methionine</name>
        <dbReference type="ChEBI" id="CHEBI:59789"/>
    </ligand>
</feature>
<feature type="binding site" evidence="1">
    <location>
        <begin position="127"/>
        <end position="132"/>
    </location>
    <ligand>
        <name>S-adenosyl-L-methionine</name>
        <dbReference type="ChEBI" id="CHEBI:59789"/>
    </ligand>
</feature>
<comment type="function">
    <text evidence="1">Specifically methylates the pseudouridine at position 1915 (m3Psi1915) in 23S rRNA.</text>
</comment>
<comment type="catalytic activity">
    <reaction evidence="1">
        <text>pseudouridine(1915) in 23S rRNA + S-adenosyl-L-methionine = N(3)-methylpseudouridine(1915) in 23S rRNA + S-adenosyl-L-homocysteine + H(+)</text>
        <dbReference type="Rhea" id="RHEA:42752"/>
        <dbReference type="Rhea" id="RHEA-COMP:10221"/>
        <dbReference type="Rhea" id="RHEA-COMP:10222"/>
        <dbReference type="ChEBI" id="CHEBI:15378"/>
        <dbReference type="ChEBI" id="CHEBI:57856"/>
        <dbReference type="ChEBI" id="CHEBI:59789"/>
        <dbReference type="ChEBI" id="CHEBI:65314"/>
        <dbReference type="ChEBI" id="CHEBI:74486"/>
        <dbReference type="EC" id="2.1.1.177"/>
    </reaction>
</comment>
<comment type="subunit">
    <text evidence="1">Homodimer.</text>
</comment>
<comment type="subcellular location">
    <subcellularLocation>
        <location evidence="1">Cytoplasm</location>
    </subcellularLocation>
</comment>
<comment type="similarity">
    <text evidence="1">Belongs to the RNA methyltransferase RlmH family.</text>
</comment>
<organism>
    <name type="scientific">Clostridium botulinum (strain Okra / Type B1)</name>
    <dbReference type="NCBI Taxonomy" id="498213"/>
    <lineage>
        <taxon>Bacteria</taxon>
        <taxon>Bacillati</taxon>
        <taxon>Bacillota</taxon>
        <taxon>Clostridia</taxon>
        <taxon>Eubacteriales</taxon>
        <taxon>Clostridiaceae</taxon>
        <taxon>Clostridium</taxon>
    </lineage>
</organism>
<accession>B1IH25</accession>
<keyword id="KW-0963">Cytoplasm</keyword>
<keyword id="KW-0489">Methyltransferase</keyword>
<keyword id="KW-0698">rRNA processing</keyword>
<keyword id="KW-0949">S-adenosyl-L-methionine</keyword>
<keyword id="KW-0808">Transferase</keyword>
<dbReference type="EC" id="2.1.1.177" evidence="1"/>
<dbReference type="EMBL" id="CP000939">
    <property type="protein sequence ID" value="ACA44922.1"/>
    <property type="molecule type" value="Genomic_DNA"/>
</dbReference>
<dbReference type="RefSeq" id="WP_003400968.1">
    <property type="nucleotide sequence ID" value="NC_010516.1"/>
</dbReference>
<dbReference type="SMR" id="B1IH25"/>
<dbReference type="KEGG" id="cbb:CLD_0914"/>
<dbReference type="HOGENOM" id="CLU_100552_0_0_9"/>
<dbReference type="Proteomes" id="UP000008541">
    <property type="component" value="Chromosome"/>
</dbReference>
<dbReference type="GO" id="GO:0005737">
    <property type="term" value="C:cytoplasm"/>
    <property type="evidence" value="ECO:0007669"/>
    <property type="project" value="UniProtKB-SubCell"/>
</dbReference>
<dbReference type="GO" id="GO:0070038">
    <property type="term" value="F:rRNA (pseudouridine-N3-)-methyltransferase activity"/>
    <property type="evidence" value="ECO:0007669"/>
    <property type="project" value="UniProtKB-UniRule"/>
</dbReference>
<dbReference type="CDD" id="cd18081">
    <property type="entry name" value="RlmH-like"/>
    <property type="match status" value="1"/>
</dbReference>
<dbReference type="Gene3D" id="3.40.1280.10">
    <property type="match status" value="1"/>
</dbReference>
<dbReference type="HAMAP" id="MF_00658">
    <property type="entry name" value="23SrRNA_methyltr_H"/>
    <property type="match status" value="1"/>
</dbReference>
<dbReference type="InterPro" id="IPR029028">
    <property type="entry name" value="Alpha/beta_knot_MTases"/>
</dbReference>
<dbReference type="InterPro" id="IPR003742">
    <property type="entry name" value="RlmH-like"/>
</dbReference>
<dbReference type="InterPro" id="IPR029026">
    <property type="entry name" value="tRNA_m1G_MTases_N"/>
</dbReference>
<dbReference type="NCBIfam" id="NF000985">
    <property type="entry name" value="PRK00103.1-3"/>
    <property type="match status" value="1"/>
</dbReference>
<dbReference type="NCBIfam" id="TIGR00246">
    <property type="entry name" value="tRNA_RlmH_YbeA"/>
    <property type="match status" value="1"/>
</dbReference>
<dbReference type="PANTHER" id="PTHR33603">
    <property type="entry name" value="METHYLTRANSFERASE"/>
    <property type="match status" value="1"/>
</dbReference>
<dbReference type="PANTHER" id="PTHR33603:SF1">
    <property type="entry name" value="RIBOSOMAL RNA LARGE SUBUNIT METHYLTRANSFERASE H"/>
    <property type="match status" value="1"/>
</dbReference>
<dbReference type="Pfam" id="PF02590">
    <property type="entry name" value="SPOUT_MTase"/>
    <property type="match status" value="1"/>
</dbReference>
<dbReference type="PIRSF" id="PIRSF004505">
    <property type="entry name" value="MT_bac"/>
    <property type="match status" value="1"/>
</dbReference>
<dbReference type="SUPFAM" id="SSF75217">
    <property type="entry name" value="alpha/beta knot"/>
    <property type="match status" value="1"/>
</dbReference>
<reference key="1">
    <citation type="journal article" date="2007" name="PLoS ONE">
        <title>Analysis of the neurotoxin complex genes in Clostridium botulinum A1-A4 and B1 strains: BoNT/A3, /Ba4 and /B1 clusters are located within plasmids.</title>
        <authorList>
            <person name="Smith T.J."/>
            <person name="Hill K.K."/>
            <person name="Foley B.T."/>
            <person name="Detter J.C."/>
            <person name="Munk A.C."/>
            <person name="Bruce D.C."/>
            <person name="Doggett N.A."/>
            <person name="Smith L.A."/>
            <person name="Marks J.D."/>
            <person name="Xie G."/>
            <person name="Brettin T.S."/>
        </authorList>
    </citation>
    <scope>NUCLEOTIDE SEQUENCE [LARGE SCALE GENOMIC DNA]</scope>
    <source>
        <strain>Okra / Type B1</strain>
    </source>
</reference>
<evidence type="ECO:0000255" key="1">
    <source>
        <dbReference type="HAMAP-Rule" id="MF_00658"/>
    </source>
</evidence>
<protein>
    <recommendedName>
        <fullName evidence="1">Ribosomal RNA large subunit methyltransferase H</fullName>
        <ecNumber evidence="1">2.1.1.177</ecNumber>
    </recommendedName>
    <alternativeName>
        <fullName evidence="1">23S rRNA (pseudouridine1915-N3)-methyltransferase</fullName>
    </alternativeName>
    <alternativeName>
        <fullName evidence="1">23S rRNA m3Psi1915 methyltransferase</fullName>
    </alternativeName>
    <alternativeName>
        <fullName evidence="1">rRNA (pseudouridine-N3-)-methyltransferase RlmH</fullName>
    </alternativeName>
</protein>
<sequence>MNISIISVGKIKEKFLKAAIDEYSKRLSKYCKLNIIEVTDEKTPDNASLKEENIIKEKEGNLILKHIKDNSFVIALDLKGKAITSEEFSDLIENCRLTGNSTIAFVIGGSLGLSEQVLSRANYKLSFSKMTFPHQLFRVMLLEQVYRAFRILCGEPYHK</sequence>
<gene>
    <name evidence="1" type="primary">rlmH</name>
    <name type="ordered locus">CLD_0914</name>
</gene>
<name>RLMH_CLOBK</name>
<proteinExistence type="inferred from homology"/>